<feature type="initiator methionine" description="Removed" evidence="1">
    <location>
        <position position="1"/>
    </location>
</feature>
<feature type="chain" id="PRO_0000235989" description="cAMP-regulated phosphoprotein 19">
    <location>
        <begin position="2"/>
        <end position="112"/>
    </location>
</feature>
<feature type="region of interest" description="Disordered" evidence="4">
    <location>
        <begin position="1"/>
        <end position="48"/>
    </location>
</feature>
<feature type="region of interest" description="Disordered" evidence="4">
    <location>
        <begin position="73"/>
        <end position="112"/>
    </location>
</feature>
<feature type="compositionally biased region" description="Low complexity" evidence="4">
    <location>
        <begin position="1"/>
        <end position="11"/>
    </location>
</feature>
<feature type="compositionally biased region" description="Basic and acidic residues" evidence="4">
    <location>
        <begin position="12"/>
        <end position="32"/>
    </location>
</feature>
<feature type="modified residue" description="N-acetylserine" evidence="1">
    <location>
        <position position="2"/>
    </location>
</feature>
<feature type="modified residue" description="Phosphoserine; by GWL" evidence="2">
    <location>
        <position position="62"/>
    </location>
</feature>
<feature type="modified residue" description="Phosphoserine; by GWL" evidence="2">
    <location>
        <position position="104"/>
    </location>
</feature>
<feature type="modified residue" description="Phosphoserine; by PKA" evidence="3">
    <location>
        <position position="104"/>
    </location>
</feature>
<organism>
    <name type="scientific">Gallus gallus</name>
    <name type="common">Chicken</name>
    <dbReference type="NCBI Taxonomy" id="9031"/>
    <lineage>
        <taxon>Eukaryota</taxon>
        <taxon>Metazoa</taxon>
        <taxon>Chordata</taxon>
        <taxon>Craniata</taxon>
        <taxon>Vertebrata</taxon>
        <taxon>Euteleostomi</taxon>
        <taxon>Archelosauria</taxon>
        <taxon>Archosauria</taxon>
        <taxon>Dinosauria</taxon>
        <taxon>Saurischia</taxon>
        <taxon>Theropoda</taxon>
        <taxon>Coelurosauria</taxon>
        <taxon>Aves</taxon>
        <taxon>Neognathae</taxon>
        <taxon>Galloanserae</taxon>
        <taxon>Galliformes</taxon>
        <taxon>Phasianidae</taxon>
        <taxon>Phasianinae</taxon>
        <taxon>Gallus</taxon>
    </lineage>
</organism>
<sequence>MSAESPEPASAEEQKEMEDKVISPEKAEEAKLKARYPHLGQKPGGSDFLRKRLQKGQKYFDSGDYNMAKAKMKNKQLPTAAPDKTEVTGDHIPTPQDLPQRKPSLVASKLAG</sequence>
<reference key="1">
    <citation type="journal article" date="2005" name="Genome Biol.">
        <title>Full-length cDNAs from chicken bursal lymphocytes to facilitate gene function analysis.</title>
        <authorList>
            <person name="Caldwell R.B."/>
            <person name="Kierzek A.M."/>
            <person name="Arakawa H."/>
            <person name="Bezzubov Y."/>
            <person name="Zaim J."/>
            <person name="Fiedler P."/>
            <person name="Kutter S."/>
            <person name="Blagodatski A."/>
            <person name="Kostovska D."/>
            <person name="Koter M."/>
            <person name="Plachy J."/>
            <person name="Carninci P."/>
            <person name="Hayashizaki Y."/>
            <person name="Buerstedde J.-M."/>
        </authorList>
    </citation>
    <scope>NUCLEOTIDE SEQUENCE [LARGE SCALE MRNA]</scope>
    <source>
        <strain>CB</strain>
        <tissue>Bursa of Fabricius</tissue>
    </source>
</reference>
<protein>
    <recommendedName>
        <fullName evidence="2">cAMP-regulated phosphoprotein 19</fullName>
        <shortName>ARPP-19</shortName>
    </recommendedName>
</protein>
<evidence type="ECO:0000250" key="1"/>
<evidence type="ECO:0000250" key="2">
    <source>
        <dbReference type="UniProtKB" id="P56211"/>
    </source>
</evidence>
<evidence type="ECO:0000250" key="3">
    <source>
        <dbReference type="UniProtKB" id="P56212"/>
    </source>
</evidence>
<evidence type="ECO:0000256" key="4">
    <source>
        <dbReference type="SAM" id="MobiDB-lite"/>
    </source>
</evidence>
<evidence type="ECO:0000305" key="5"/>
<proteinExistence type="inferred from homology"/>
<name>ARP19_CHICK</name>
<gene>
    <name type="primary">ARPP19</name>
    <name type="ORF">RCJMB04_4f12</name>
</gene>
<accession>Q5ZLY8</accession>
<dbReference type="EMBL" id="AJ719596">
    <property type="protein sequence ID" value="CAG31255.1"/>
    <property type="molecule type" value="mRNA"/>
</dbReference>
<dbReference type="RefSeq" id="NP_001075176.1">
    <property type="nucleotide sequence ID" value="NM_001081707.2"/>
</dbReference>
<dbReference type="SMR" id="Q5ZLY8"/>
<dbReference type="FunCoup" id="Q5ZLY8">
    <property type="interactions" value="1779"/>
</dbReference>
<dbReference type="STRING" id="9031.ENSGALP00000038292"/>
<dbReference type="PaxDb" id="9031-ENSGALP00000038292"/>
<dbReference type="Ensembl" id="ENSGALT00010050488.1">
    <property type="protein sequence ID" value="ENSGALP00010029804.1"/>
    <property type="gene ID" value="ENSGALG00010020887.1"/>
</dbReference>
<dbReference type="GeneID" id="768853"/>
<dbReference type="KEGG" id="gga:768853"/>
<dbReference type="CTD" id="10776"/>
<dbReference type="VEuPathDB" id="HostDB:geneid_768853"/>
<dbReference type="eggNOG" id="KOG4076">
    <property type="taxonomic scope" value="Eukaryota"/>
</dbReference>
<dbReference type="GeneTree" id="ENSGT00940000154555"/>
<dbReference type="HOGENOM" id="CLU_125025_1_0_1"/>
<dbReference type="InParanoid" id="Q5ZLY8"/>
<dbReference type="OMA" id="QMAKQKY"/>
<dbReference type="OrthoDB" id="5949865at2759"/>
<dbReference type="PhylomeDB" id="Q5ZLY8"/>
<dbReference type="Reactome" id="R-GGA-2465910">
    <property type="pathway name" value="MASTL Facilitates Mitotic Progression"/>
</dbReference>
<dbReference type="PRO" id="PR:Q5ZLY8"/>
<dbReference type="Proteomes" id="UP000000539">
    <property type="component" value="Chromosome 10"/>
</dbReference>
<dbReference type="Bgee" id="ENSGALG00000017370">
    <property type="expression patterns" value="Expressed in spermatocyte and 13 other cell types or tissues"/>
</dbReference>
<dbReference type="GO" id="GO:0005737">
    <property type="term" value="C:cytoplasm"/>
    <property type="evidence" value="ECO:0000318"/>
    <property type="project" value="GO_Central"/>
</dbReference>
<dbReference type="GO" id="GO:0019212">
    <property type="term" value="F:phosphatase inhibitor activity"/>
    <property type="evidence" value="ECO:0000250"/>
    <property type="project" value="UniProtKB"/>
</dbReference>
<dbReference type="GO" id="GO:0015459">
    <property type="term" value="F:potassium channel regulator activity"/>
    <property type="evidence" value="ECO:0000250"/>
    <property type="project" value="AgBase"/>
</dbReference>
<dbReference type="GO" id="GO:0051721">
    <property type="term" value="F:protein phosphatase 2A binding"/>
    <property type="evidence" value="ECO:0000250"/>
    <property type="project" value="UniProtKB"/>
</dbReference>
<dbReference type="GO" id="GO:0004864">
    <property type="term" value="F:protein phosphatase inhibitor activity"/>
    <property type="evidence" value="ECO:0000318"/>
    <property type="project" value="GO_Central"/>
</dbReference>
<dbReference type="GO" id="GO:0019888">
    <property type="term" value="F:protein phosphatase regulator activity"/>
    <property type="evidence" value="ECO:0000250"/>
    <property type="project" value="UniProtKB"/>
</dbReference>
<dbReference type="GO" id="GO:0005102">
    <property type="term" value="F:signaling receptor binding"/>
    <property type="evidence" value="ECO:0000250"/>
    <property type="project" value="AgBase"/>
</dbReference>
<dbReference type="GO" id="GO:0051301">
    <property type="term" value="P:cell division"/>
    <property type="evidence" value="ECO:0007669"/>
    <property type="project" value="UniProtKB-KW"/>
</dbReference>
<dbReference type="GO" id="GO:0000086">
    <property type="term" value="P:G2/M transition of mitotic cell cycle"/>
    <property type="evidence" value="ECO:0000250"/>
    <property type="project" value="UniProtKB"/>
</dbReference>
<dbReference type="GO" id="GO:0000278">
    <property type="term" value="P:mitotic cell cycle"/>
    <property type="evidence" value="ECO:0000250"/>
    <property type="project" value="UniProtKB"/>
</dbReference>
<dbReference type="GO" id="GO:0045722">
    <property type="term" value="P:positive regulation of gluconeogenesis"/>
    <property type="evidence" value="ECO:0000250"/>
    <property type="project" value="AgBase"/>
</dbReference>
<dbReference type="InterPro" id="IPR006760">
    <property type="entry name" value="Endosulphine"/>
</dbReference>
<dbReference type="PANTHER" id="PTHR10358:SF4">
    <property type="entry name" value="CAMP-REGULATED PHOSPHOPROTEIN 19"/>
    <property type="match status" value="1"/>
</dbReference>
<dbReference type="PANTHER" id="PTHR10358">
    <property type="entry name" value="ENDOSULFINE"/>
    <property type="match status" value="1"/>
</dbReference>
<dbReference type="Pfam" id="PF04667">
    <property type="entry name" value="Endosulfine"/>
    <property type="match status" value="1"/>
</dbReference>
<keyword id="KW-0007">Acetylation</keyword>
<keyword id="KW-0131">Cell cycle</keyword>
<keyword id="KW-0132">Cell division</keyword>
<keyword id="KW-0963">Cytoplasm</keyword>
<keyword id="KW-0498">Mitosis</keyword>
<keyword id="KW-0597">Phosphoprotein</keyword>
<keyword id="KW-0650">Protein phosphatase inhibitor</keyword>
<keyword id="KW-1185">Reference proteome</keyword>
<comment type="function">
    <text evidence="2">Protein phosphatase inhibitor that specifically inhibits protein phosphatase 2A (PP2A) during mitosis (By similarity). Inhibition of PP2A is enhanced when ARPP19 is phosphorylated (By similarity). When phosphorylated at Ser-62 during mitosis, specifically interacts with PPP2R2D (PR55-delta) and inhibits its activity, leading to inactivation of PP2A, an essential condition to keep cyclin-B1-CDK1 activity high during M phase (By similarity).</text>
</comment>
<comment type="subunit">
    <text evidence="1">Interacts (when phosphorylated at Ser-62) with PPP2R2D.</text>
</comment>
<comment type="subcellular location">
    <subcellularLocation>
        <location evidence="1">Cytoplasm</location>
    </subcellularLocation>
</comment>
<comment type="PTM">
    <text evidence="1">Phosphorylation at Ser-62 by MASTL/GWL during mitosis is essential for interaction with PPP2R2D (PR55-delta) and subsequent inactivation of PP2A.</text>
</comment>
<comment type="similarity">
    <text evidence="5">Belongs to the endosulfine family.</text>
</comment>